<organism>
    <name type="scientific">Dictyostelium discoideum</name>
    <name type="common">Social amoeba</name>
    <dbReference type="NCBI Taxonomy" id="44689"/>
    <lineage>
        <taxon>Eukaryota</taxon>
        <taxon>Amoebozoa</taxon>
        <taxon>Evosea</taxon>
        <taxon>Eumycetozoa</taxon>
        <taxon>Dictyostelia</taxon>
        <taxon>Dictyosteliales</taxon>
        <taxon>Dictyosteliaceae</taxon>
        <taxon>Dictyostelium</taxon>
    </lineage>
</organism>
<reference key="1">
    <citation type="journal article" date="2001" name="Nucleic Acids Res.">
        <title>The Dictyostelium discoideum family of Rho-related proteins.</title>
        <authorList>
            <person name="Rivero F."/>
            <person name="Dislich H."/>
            <person name="Gloeckner G."/>
            <person name="Noegel A.A."/>
        </authorList>
    </citation>
    <scope>NUCLEOTIDE SEQUENCE [GENOMIC DNA]</scope>
    <source>
        <strain>AX4</strain>
    </source>
</reference>
<reference key="2">
    <citation type="journal article" date="2005" name="Nature">
        <title>The genome of the social amoeba Dictyostelium discoideum.</title>
        <authorList>
            <person name="Eichinger L."/>
            <person name="Pachebat J.A."/>
            <person name="Gloeckner G."/>
            <person name="Rajandream M.A."/>
            <person name="Sucgang R."/>
            <person name="Berriman M."/>
            <person name="Song J."/>
            <person name="Olsen R."/>
            <person name="Szafranski K."/>
            <person name="Xu Q."/>
            <person name="Tunggal B."/>
            <person name="Kummerfeld S."/>
            <person name="Madera M."/>
            <person name="Konfortov B.A."/>
            <person name="Rivero F."/>
            <person name="Bankier A.T."/>
            <person name="Lehmann R."/>
            <person name="Hamlin N."/>
            <person name="Davies R."/>
            <person name="Gaudet P."/>
            <person name="Fey P."/>
            <person name="Pilcher K."/>
            <person name="Chen G."/>
            <person name="Saunders D."/>
            <person name="Sodergren E.J."/>
            <person name="Davis P."/>
            <person name="Kerhornou A."/>
            <person name="Nie X."/>
            <person name="Hall N."/>
            <person name="Anjard C."/>
            <person name="Hemphill L."/>
            <person name="Bason N."/>
            <person name="Farbrother P."/>
            <person name="Desany B."/>
            <person name="Just E."/>
            <person name="Morio T."/>
            <person name="Rost R."/>
            <person name="Churcher C.M."/>
            <person name="Cooper J."/>
            <person name="Haydock S."/>
            <person name="van Driessche N."/>
            <person name="Cronin A."/>
            <person name="Goodhead I."/>
            <person name="Muzny D.M."/>
            <person name="Mourier T."/>
            <person name="Pain A."/>
            <person name="Lu M."/>
            <person name="Harper D."/>
            <person name="Lindsay R."/>
            <person name="Hauser H."/>
            <person name="James K.D."/>
            <person name="Quiles M."/>
            <person name="Madan Babu M."/>
            <person name="Saito T."/>
            <person name="Buchrieser C."/>
            <person name="Wardroper A."/>
            <person name="Felder M."/>
            <person name="Thangavelu M."/>
            <person name="Johnson D."/>
            <person name="Knights A."/>
            <person name="Loulseged H."/>
            <person name="Mungall K.L."/>
            <person name="Oliver K."/>
            <person name="Price C."/>
            <person name="Quail M.A."/>
            <person name="Urushihara H."/>
            <person name="Hernandez J."/>
            <person name="Rabbinowitsch E."/>
            <person name="Steffen D."/>
            <person name="Sanders M."/>
            <person name="Ma J."/>
            <person name="Kohara Y."/>
            <person name="Sharp S."/>
            <person name="Simmonds M.N."/>
            <person name="Spiegler S."/>
            <person name="Tivey A."/>
            <person name="Sugano S."/>
            <person name="White B."/>
            <person name="Walker D."/>
            <person name="Woodward J.R."/>
            <person name="Winckler T."/>
            <person name="Tanaka Y."/>
            <person name="Shaulsky G."/>
            <person name="Schleicher M."/>
            <person name="Weinstock G.M."/>
            <person name="Rosenthal A."/>
            <person name="Cox E.C."/>
            <person name="Chisholm R.L."/>
            <person name="Gibbs R.A."/>
            <person name="Loomis W.F."/>
            <person name="Platzer M."/>
            <person name="Kay R.R."/>
            <person name="Williams J.G."/>
            <person name="Dear P.H."/>
            <person name="Noegel A.A."/>
            <person name="Barrell B.G."/>
            <person name="Kuspa A."/>
        </authorList>
    </citation>
    <scope>NUCLEOTIDE SEQUENCE [LARGE SCALE GENOMIC DNA]</scope>
    <source>
        <strain>AX4</strain>
    </source>
</reference>
<dbReference type="EMBL" id="AF310895">
    <property type="protein sequence ID" value="AAG45138.1"/>
    <property type="molecule type" value="Genomic_DNA"/>
</dbReference>
<dbReference type="EMBL" id="AAFI02000023">
    <property type="protein sequence ID" value="EAL68121.1"/>
    <property type="molecule type" value="Genomic_DNA"/>
</dbReference>
<dbReference type="RefSeq" id="XP_642047.1">
    <property type="nucleotide sequence ID" value="XM_636955.1"/>
</dbReference>
<dbReference type="SMR" id="Q9GPR2"/>
<dbReference type="FunCoup" id="Q9GPR2">
    <property type="interactions" value="5"/>
</dbReference>
<dbReference type="STRING" id="44689.Q9GPR2"/>
<dbReference type="PaxDb" id="44689-DDB0214826"/>
<dbReference type="EnsemblProtists" id="EAL68121">
    <property type="protein sequence ID" value="EAL68121"/>
    <property type="gene ID" value="DDB_G0277897"/>
</dbReference>
<dbReference type="GeneID" id="8621259"/>
<dbReference type="KEGG" id="ddi:DDB_G0277897"/>
<dbReference type="dictyBase" id="DDB_G0277897">
    <property type="gene designation" value="racI"/>
</dbReference>
<dbReference type="VEuPathDB" id="AmoebaDB:DDB_G0277897"/>
<dbReference type="eggNOG" id="KOG0393">
    <property type="taxonomic scope" value="Eukaryota"/>
</dbReference>
<dbReference type="HOGENOM" id="CLU_041217_21_7_1"/>
<dbReference type="InParanoid" id="Q9GPR2"/>
<dbReference type="OMA" id="ATMYLEC"/>
<dbReference type="PhylomeDB" id="Q9GPR2"/>
<dbReference type="Reactome" id="R-DDI-6798695">
    <property type="pathway name" value="Neutrophil degranulation"/>
</dbReference>
<dbReference type="Reactome" id="R-DDI-9013404">
    <property type="pathway name" value="RAC2 GTPase cycle"/>
</dbReference>
<dbReference type="Reactome" id="R-DDI-9013407">
    <property type="pathway name" value="RHOH GTPase cycle"/>
</dbReference>
<dbReference type="Reactome" id="R-DDI-9013408">
    <property type="pathway name" value="RHOG GTPase cycle"/>
</dbReference>
<dbReference type="Reactome" id="R-DDI-9013418">
    <property type="pathway name" value="RHOBTB2 GTPase cycle"/>
</dbReference>
<dbReference type="Reactome" id="R-DDI-9013422">
    <property type="pathway name" value="RHOBTB1 GTPase cycle"/>
</dbReference>
<dbReference type="PRO" id="PR:Q9GPR2"/>
<dbReference type="Proteomes" id="UP000002195">
    <property type="component" value="Chromosome 3"/>
</dbReference>
<dbReference type="GO" id="GO:0042995">
    <property type="term" value="C:cell projection"/>
    <property type="evidence" value="ECO:0000318"/>
    <property type="project" value="GO_Central"/>
</dbReference>
<dbReference type="GO" id="GO:0031410">
    <property type="term" value="C:cytoplasmic vesicle"/>
    <property type="evidence" value="ECO:0000318"/>
    <property type="project" value="GO_Central"/>
</dbReference>
<dbReference type="GO" id="GO:0005856">
    <property type="term" value="C:cytoskeleton"/>
    <property type="evidence" value="ECO:0000318"/>
    <property type="project" value="GO_Central"/>
</dbReference>
<dbReference type="GO" id="GO:0005886">
    <property type="term" value="C:plasma membrane"/>
    <property type="evidence" value="ECO:0000318"/>
    <property type="project" value="GO_Central"/>
</dbReference>
<dbReference type="GO" id="GO:0005525">
    <property type="term" value="F:GTP binding"/>
    <property type="evidence" value="ECO:0000318"/>
    <property type="project" value="GO_Central"/>
</dbReference>
<dbReference type="GO" id="GO:0003924">
    <property type="term" value="F:GTPase activity"/>
    <property type="evidence" value="ECO:0000318"/>
    <property type="project" value="GO_Central"/>
</dbReference>
<dbReference type="GO" id="GO:0019901">
    <property type="term" value="F:protein kinase binding"/>
    <property type="evidence" value="ECO:0000318"/>
    <property type="project" value="GO_Central"/>
</dbReference>
<dbReference type="GO" id="GO:0007015">
    <property type="term" value="P:actin filament organization"/>
    <property type="evidence" value="ECO:0000318"/>
    <property type="project" value="GO_Central"/>
</dbReference>
<dbReference type="GO" id="GO:0030865">
    <property type="term" value="P:cortical cytoskeleton organization"/>
    <property type="evidence" value="ECO:0000318"/>
    <property type="project" value="GO_Central"/>
</dbReference>
<dbReference type="GO" id="GO:0007163">
    <property type="term" value="P:establishment or maintenance of cell polarity"/>
    <property type="evidence" value="ECO:0000318"/>
    <property type="project" value="GO_Central"/>
</dbReference>
<dbReference type="GO" id="GO:0032956">
    <property type="term" value="P:regulation of actin cytoskeleton organization"/>
    <property type="evidence" value="ECO:0000318"/>
    <property type="project" value="GO_Central"/>
</dbReference>
<dbReference type="GO" id="GO:0008360">
    <property type="term" value="P:regulation of cell shape"/>
    <property type="evidence" value="ECO:0000318"/>
    <property type="project" value="GO_Central"/>
</dbReference>
<dbReference type="GO" id="GO:0007165">
    <property type="term" value="P:signal transduction"/>
    <property type="evidence" value="ECO:0000318"/>
    <property type="project" value="GO_Central"/>
</dbReference>
<dbReference type="GO" id="GO:0007264">
    <property type="term" value="P:small GTPase-mediated signal transduction"/>
    <property type="evidence" value="ECO:0007669"/>
    <property type="project" value="InterPro"/>
</dbReference>
<dbReference type="CDD" id="cd00157">
    <property type="entry name" value="Rho"/>
    <property type="match status" value="1"/>
</dbReference>
<dbReference type="FunFam" id="3.40.50.300:FF:002060">
    <property type="entry name" value="Rho family GTPase"/>
    <property type="match status" value="1"/>
</dbReference>
<dbReference type="Gene3D" id="3.40.50.300">
    <property type="entry name" value="P-loop containing nucleotide triphosphate hydrolases"/>
    <property type="match status" value="1"/>
</dbReference>
<dbReference type="InterPro" id="IPR027417">
    <property type="entry name" value="P-loop_NTPase"/>
</dbReference>
<dbReference type="InterPro" id="IPR005225">
    <property type="entry name" value="Small_GTP-bd"/>
</dbReference>
<dbReference type="InterPro" id="IPR001806">
    <property type="entry name" value="Small_GTPase"/>
</dbReference>
<dbReference type="InterPro" id="IPR003578">
    <property type="entry name" value="Small_GTPase_Rho"/>
</dbReference>
<dbReference type="NCBIfam" id="TIGR00231">
    <property type="entry name" value="small_GTP"/>
    <property type="match status" value="1"/>
</dbReference>
<dbReference type="PANTHER" id="PTHR24072">
    <property type="entry name" value="RHO FAMILY GTPASE"/>
    <property type="match status" value="1"/>
</dbReference>
<dbReference type="Pfam" id="PF00071">
    <property type="entry name" value="Ras"/>
    <property type="match status" value="1"/>
</dbReference>
<dbReference type="PRINTS" id="PR00449">
    <property type="entry name" value="RASTRNSFRMNG"/>
</dbReference>
<dbReference type="SMART" id="SM00175">
    <property type="entry name" value="RAB"/>
    <property type="match status" value="1"/>
</dbReference>
<dbReference type="SMART" id="SM00173">
    <property type="entry name" value="RAS"/>
    <property type="match status" value="1"/>
</dbReference>
<dbReference type="SMART" id="SM00174">
    <property type="entry name" value="RHO"/>
    <property type="match status" value="1"/>
</dbReference>
<dbReference type="SUPFAM" id="SSF52540">
    <property type="entry name" value="P-loop containing nucleoside triphosphate hydrolases"/>
    <property type="match status" value="1"/>
</dbReference>
<dbReference type="PROSITE" id="PS51420">
    <property type="entry name" value="RHO"/>
    <property type="match status" value="1"/>
</dbReference>
<gene>
    <name type="primary">racI</name>
    <name type="ORF">DDB_G0277897</name>
</gene>
<name>RACI_DICDI</name>
<proteinExistence type="inferred from homology"/>
<sequence>MQKSYIKLLVLGDSKTGKTTMMMTYSTGSFPTGYVPSHVDATSLDIEYNKQVCHVGFWDSSALAEFDNTRPSTYPNTNVIILCFSIDSPTSFENVSKKWIPEIRQYAPSIHTPIILLGTKCDLREDENTINLLKENNQMPPISYKQGLALSKEIKATMYLECSSLCNQGVNEIFKQVVRCHLYCKDGVLNDPTTTTSNTSKCIIQ</sequence>
<comment type="subcellular location">
    <subcellularLocation>
        <location evidence="3">Cell membrane</location>
        <topology evidence="3">Lipid-anchor</topology>
        <orientation evidence="3">Cytoplasmic side</orientation>
    </subcellularLocation>
</comment>
<comment type="similarity">
    <text evidence="3">Belongs to the small GTPase superfamily. Rho family.</text>
</comment>
<feature type="chain" id="PRO_0000198907" description="Rho-related protein racI">
    <location>
        <begin position="1"/>
        <end position="202"/>
    </location>
</feature>
<feature type="propeptide" id="PRO_0000281256" description="Removed in mature form" evidence="1">
    <location>
        <begin position="203"/>
        <end position="205"/>
    </location>
</feature>
<feature type="short sequence motif" description="Effector region" evidence="2">
    <location>
        <begin position="34"/>
        <end position="42"/>
    </location>
</feature>
<feature type="binding site" evidence="1">
    <location>
        <begin position="12"/>
        <end position="19"/>
    </location>
    <ligand>
        <name>GTP</name>
        <dbReference type="ChEBI" id="CHEBI:37565"/>
    </ligand>
</feature>
<feature type="binding site" evidence="1">
    <location>
        <begin position="59"/>
        <end position="63"/>
    </location>
    <ligand>
        <name>GTP</name>
        <dbReference type="ChEBI" id="CHEBI:37565"/>
    </ligand>
</feature>
<feature type="binding site" evidence="1">
    <location>
        <begin position="119"/>
        <end position="122"/>
    </location>
    <ligand>
        <name>GTP</name>
        <dbReference type="ChEBI" id="CHEBI:37565"/>
    </ligand>
</feature>
<feature type="modified residue" description="Cysteine methyl ester" evidence="1">
    <location>
        <position position="202"/>
    </location>
</feature>
<feature type="lipid moiety-binding region" description="S-geranylgeranyl cysteine" evidence="1">
    <location>
        <position position="202"/>
    </location>
</feature>
<accession>Q9GPR2</accession>
<accession>Q54Z05</accession>
<keyword id="KW-1003">Cell membrane</keyword>
<keyword id="KW-0342">GTP-binding</keyword>
<keyword id="KW-0449">Lipoprotein</keyword>
<keyword id="KW-0472">Membrane</keyword>
<keyword id="KW-0488">Methylation</keyword>
<keyword id="KW-0547">Nucleotide-binding</keyword>
<keyword id="KW-0636">Prenylation</keyword>
<keyword id="KW-1185">Reference proteome</keyword>
<evidence type="ECO:0000250" key="1"/>
<evidence type="ECO:0000255" key="2"/>
<evidence type="ECO:0000305" key="3"/>
<protein>
    <recommendedName>
        <fullName>Rho-related protein racI</fullName>
    </recommendedName>
</protein>